<keyword id="KW-0002">3D-structure</keyword>
<keyword id="KW-0025">Alternative splicing</keyword>
<keyword id="KW-0158">Chromosome</keyword>
<keyword id="KW-0235">DNA replication</keyword>
<keyword id="KW-0238">DNA-binding</keyword>
<keyword id="KW-0539">Nucleus</keyword>
<keyword id="KW-0597">Phosphoprotein</keyword>
<keyword id="KW-1267">Proteomics identification</keyword>
<keyword id="KW-1185">Reference proteome</keyword>
<keyword id="KW-0832">Ubl conjugation</keyword>
<sequence length="711" mass="82254">MATSSMSKGCFVFKPNSKKRKISLPIEDYFNKGKNEPEDSKLRFETYQLIWQQMKSENERLQEELNKNLFDNLIEFLQKSHSGFQKNSRDLGGQIKLREIPTAALVLGVNVTDHDLTFGSLTEALQNNVTPYVVSLQAKDCPDMKHFLQKLISQLMDCCVDIKSKEEESVHVTQRKTHYSMDSLSSWYMTVTQKTDPKMLSKKRTTSSQWQSPPVVVILKDMESFATKVLQDFIIISSQHLHEFPLILIFGIATSPIIIHRLLPHAVSSLLCIELFQSLSCKEHLTTVLDKLLLTTQFPFKINEKVLQVLTNIFLYHDFSVQNFIKGLQLSLLEHFYSQPLSVLCCNLPEAKRRINFLSNNQCENIRRLPSFRRYVEKQASEKQVALLTNERYLKEETQLLLENLHVYHMNYFLVLRCLHKFTSSLPKYPLGRQIRELYCTCLEKNIWDSEEYASVLQLLRMLAKDELMTILEKCFKVFKSYCENHLGSTAKRIEEFLAQFQSLDETKEEEDASGSQPKGLQKTDLYHLQKSLLEMKELRRSKKQTKFEVLRENVVNFIDCLVREYLLPPETQPLHEVVYFSAAHALREHLNAAPRIALHTALNNPYYYLKNEALKSEEGCIPNIAPDICIAYKLHLECSRLINLVDWSEAFATVVTAAEKMDANSATSEEMNEIIHARFIRAVSELELLGFIKPTKQKTDHVARLTWGGC</sequence>
<proteinExistence type="evidence at protein level"/>
<name>ORC3_HUMAN</name>
<feature type="chain" id="PRO_0000127083" description="Origin recognition complex subunit 3">
    <location>
        <begin position="1"/>
        <end position="711"/>
    </location>
</feature>
<feature type="modified residue" description="Phosphoserine" evidence="10 11">
    <location>
        <position position="23"/>
    </location>
</feature>
<feature type="modified residue" description="Phosphoserine" evidence="9">
    <location>
        <position position="516"/>
    </location>
</feature>
<feature type="splice variant" id="VSP_044893" description="In isoform 3." evidence="6">
    <location>
        <begin position="1"/>
        <end position="143"/>
    </location>
</feature>
<feature type="splice variant" id="VSP_017129" description="In isoform 2." evidence="5 7">
    <original>D</original>
    <variation>DA</variation>
    <location>
        <position position="505"/>
    </location>
</feature>
<feature type="sequence variant" id="VAR_014516" description="In dbSNP:rs2307365." evidence="4">
    <original>Q</original>
    <variation>K</variation>
    <location>
        <position position="94"/>
    </location>
</feature>
<feature type="sequence variant" id="VAR_014517" description="In dbSNP:rs2307371." evidence="4">
    <original>Q</original>
    <variation>R</variation>
    <location>
        <position position="126"/>
    </location>
</feature>
<feature type="sequence variant" id="VAR_014518" description="In dbSNP:rs2307389." evidence="4">
    <original>V</original>
    <variation>I</variation>
    <location>
        <position position="217"/>
    </location>
</feature>
<feature type="sequence variant" id="VAR_014519" description="In dbSNP:rs2307374." evidence="4">
    <original>I</original>
    <variation>V</variation>
    <location>
        <position position="247"/>
    </location>
</feature>
<feature type="sequence variant" id="VAR_014520" description="In dbSNP:rs2307381.">
    <original>T</original>
    <variation>M</variation>
    <location>
        <position position="287"/>
    </location>
</feature>
<feature type="sequence variant" id="VAR_014521" description="In dbSNP:rs2307372.">
    <original>T</original>
    <variation>P</variation>
    <location>
        <position position="389"/>
    </location>
</feature>
<feature type="sequence variant" id="VAR_014522" description="In dbSNP:rs2307370.">
    <original>R</original>
    <variation>C</variation>
    <location>
        <position position="588"/>
    </location>
</feature>
<feature type="sequence variant" id="VAR_020656" description="In dbSNP:rs28381545." evidence="4">
    <original>A</original>
    <variation>T</variation>
    <location>
        <position position="626"/>
    </location>
</feature>
<feature type="sequence conflict" description="In Ref. 5; BAD96515." evidence="8" ref="5">
    <original>S</original>
    <variation>F</variation>
    <location>
        <position position="56"/>
    </location>
</feature>
<feature type="sequence conflict" description="In Ref. 4; CAB45715." evidence="8" ref="4">
    <original>K</original>
    <variation>R</variation>
    <location>
        <position position="86"/>
    </location>
</feature>
<feature type="sequence conflict" description="In Ref. 4; CAB45715." evidence="8" ref="4">
    <original>Q</original>
    <variation>R</variation>
    <location>
        <position position="137"/>
    </location>
</feature>
<feature type="sequence conflict" description="In Ref. 5; BAD96515." evidence="8" ref="5">
    <original>I</original>
    <variation>M</variation>
    <location>
        <position position="471"/>
    </location>
</feature>
<feature type="sequence conflict" description="In Ref. 4; CAB45715." evidence="8" ref="4">
    <original>K</original>
    <variation>R</variation>
    <location>
        <position position="531"/>
    </location>
</feature>
<feature type="sequence conflict" description="In Ref. 3; AAD40220 and 10; AAA96313." evidence="8" ref="3 10">
    <original>L</original>
    <variation>F</variation>
    <location>
        <position position="539"/>
    </location>
</feature>
<feature type="strand" evidence="12">
    <location>
        <begin position="6"/>
        <end position="13"/>
    </location>
</feature>
<feature type="turn" evidence="12">
    <location>
        <begin position="26"/>
        <end position="30"/>
    </location>
</feature>
<feature type="helix" evidence="12">
    <location>
        <begin position="39"/>
        <end position="65"/>
    </location>
</feature>
<feature type="helix" evidence="12">
    <location>
        <begin position="67"/>
        <end position="86"/>
    </location>
</feature>
<feature type="strand" evidence="12">
    <location>
        <begin position="100"/>
        <end position="106"/>
    </location>
</feature>
<feature type="helix" evidence="12">
    <location>
        <begin position="111"/>
        <end position="113"/>
    </location>
</feature>
<feature type="helix" evidence="12">
    <location>
        <begin position="114"/>
        <end position="128"/>
    </location>
</feature>
<feature type="strand" evidence="12">
    <location>
        <begin position="133"/>
        <end position="136"/>
    </location>
</feature>
<feature type="helix" evidence="12">
    <location>
        <begin position="138"/>
        <end position="140"/>
    </location>
</feature>
<feature type="helix" evidence="12">
    <location>
        <begin position="144"/>
        <end position="157"/>
    </location>
</feature>
<feature type="helix" evidence="12">
    <location>
        <begin position="181"/>
        <end position="192"/>
    </location>
</feature>
<feature type="strand" evidence="12">
    <location>
        <begin position="215"/>
        <end position="219"/>
    </location>
</feature>
<feature type="turn" evidence="12">
    <location>
        <begin position="222"/>
        <end position="224"/>
    </location>
</feature>
<feature type="helix" evidence="12">
    <location>
        <begin position="227"/>
        <end position="238"/>
    </location>
</feature>
<feature type="turn" evidence="12">
    <location>
        <begin position="239"/>
        <end position="243"/>
    </location>
</feature>
<feature type="strand" evidence="12">
    <location>
        <begin position="246"/>
        <end position="254"/>
    </location>
</feature>
<feature type="helix" evidence="12">
    <location>
        <begin position="258"/>
        <end position="262"/>
    </location>
</feature>
<feature type="helix" evidence="12">
    <location>
        <begin position="265"/>
        <end position="268"/>
    </location>
</feature>
<feature type="strand" evidence="12">
    <location>
        <begin position="271"/>
        <end position="277"/>
    </location>
</feature>
<feature type="helix" evidence="12">
    <location>
        <begin position="281"/>
        <end position="292"/>
    </location>
</feature>
<feature type="strand" evidence="12">
    <location>
        <begin position="296"/>
        <end position="298"/>
    </location>
</feature>
<feature type="helix" evidence="12">
    <location>
        <begin position="304"/>
        <end position="315"/>
    </location>
</feature>
<feature type="helix" evidence="12">
    <location>
        <begin position="321"/>
        <end position="338"/>
    </location>
</feature>
<feature type="helix" evidence="12">
    <location>
        <begin position="342"/>
        <end position="344"/>
    </location>
</feature>
<feature type="helix" evidence="12">
    <location>
        <begin position="348"/>
        <end position="356"/>
    </location>
</feature>
<feature type="helix" evidence="12">
    <location>
        <begin position="360"/>
        <end position="367"/>
    </location>
</feature>
<feature type="helix" evidence="12">
    <location>
        <begin position="370"/>
        <end position="377"/>
    </location>
</feature>
<feature type="helix" evidence="12">
    <location>
        <begin position="381"/>
        <end position="389"/>
    </location>
</feature>
<feature type="helix" evidence="12">
    <location>
        <begin position="391"/>
        <end position="425"/>
    </location>
</feature>
<feature type="helix" evidence="12">
    <location>
        <begin position="435"/>
        <end position="443"/>
    </location>
</feature>
<feature type="turn" evidence="12">
    <location>
        <begin position="447"/>
        <end position="449"/>
    </location>
</feature>
<feature type="helix" evidence="12">
    <location>
        <begin position="452"/>
        <end position="460"/>
    </location>
</feature>
<feature type="helix" evidence="12">
    <location>
        <begin position="465"/>
        <end position="481"/>
    </location>
</feature>
<feature type="helix" evidence="12">
    <location>
        <begin position="488"/>
        <end position="499"/>
    </location>
</feature>
<feature type="helix" evidence="12">
    <location>
        <begin position="548"/>
        <end position="565"/>
    </location>
</feature>
<feature type="helix" evidence="12">
    <location>
        <begin position="570"/>
        <end position="572"/>
    </location>
</feature>
<feature type="helix" evidence="12">
    <location>
        <begin position="576"/>
        <end position="578"/>
    </location>
</feature>
<feature type="helix" evidence="12">
    <location>
        <begin position="584"/>
        <end position="591"/>
    </location>
</feature>
<feature type="helix" evidence="12">
    <location>
        <begin position="595"/>
        <end position="604"/>
    </location>
</feature>
<feature type="turn" evidence="12">
    <location>
        <begin position="606"/>
        <end position="609"/>
    </location>
</feature>
<feature type="turn" evidence="12">
    <location>
        <begin position="611"/>
        <end position="613"/>
    </location>
</feature>
<feature type="helix" evidence="12">
    <location>
        <begin position="628"/>
        <end position="636"/>
    </location>
</feature>
<feature type="strand" evidence="13">
    <location>
        <begin position="639"/>
        <end position="641"/>
    </location>
</feature>
<feature type="helix" evidence="12">
    <location>
        <begin position="645"/>
        <end position="659"/>
    </location>
</feature>
<feature type="helix" evidence="12">
    <location>
        <begin position="676"/>
        <end position="689"/>
    </location>
</feature>
<feature type="turn" evidence="12">
    <location>
        <begin position="690"/>
        <end position="692"/>
    </location>
</feature>
<feature type="strand" evidence="12">
    <location>
        <begin position="697"/>
        <end position="700"/>
    </location>
</feature>
<dbReference type="EMBL" id="AF135044">
    <property type="protein sequence ID" value="AAD30282.1"/>
    <property type="molecule type" value="mRNA"/>
</dbReference>
<dbReference type="EMBL" id="AF125507">
    <property type="protein sequence ID" value="AAD18057.1"/>
    <property type="molecule type" value="mRNA"/>
</dbReference>
<dbReference type="EMBL" id="AF093535">
    <property type="protein sequence ID" value="AAD40220.1"/>
    <property type="molecule type" value="mRNA"/>
</dbReference>
<dbReference type="EMBL" id="AL080116">
    <property type="protein sequence ID" value="CAB45715.1"/>
    <property type="molecule type" value="mRNA"/>
</dbReference>
<dbReference type="EMBL" id="AK222795">
    <property type="protein sequence ID" value="BAD96515.1"/>
    <property type="molecule type" value="mRNA"/>
</dbReference>
<dbReference type="EMBL" id="AK303195">
    <property type="protein sequence ID" value="BAG64287.1"/>
    <property type="molecule type" value="mRNA"/>
</dbReference>
<dbReference type="EMBL" id="AK315911">
    <property type="protein sequence ID" value="BAH14282.1"/>
    <property type="molecule type" value="mRNA"/>
</dbReference>
<dbReference type="EMBL" id="AY623113">
    <property type="protein sequence ID" value="AAT38109.1"/>
    <property type="molecule type" value="Genomic_DNA"/>
</dbReference>
<dbReference type="EMBL" id="AL451126">
    <property type="status" value="NOT_ANNOTATED_CDS"/>
    <property type="molecule type" value="Genomic_DNA"/>
</dbReference>
<dbReference type="EMBL" id="AL133211">
    <property type="status" value="NOT_ANNOTATED_CDS"/>
    <property type="molecule type" value="Genomic_DNA"/>
</dbReference>
<dbReference type="EMBL" id="BC035494">
    <property type="protein sequence ID" value="AAH35494.1"/>
    <property type="molecule type" value="mRNA"/>
</dbReference>
<dbReference type="EMBL" id="BC047689">
    <property type="protein sequence ID" value="AAH47689.1"/>
    <property type="status" value="ALT_TERM"/>
    <property type="molecule type" value="mRNA"/>
</dbReference>
<dbReference type="EMBL" id="U50950">
    <property type="protein sequence ID" value="AAA96313.1"/>
    <property type="molecule type" value="mRNA"/>
</dbReference>
<dbReference type="CCDS" id="CCDS43486.1">
    <molecule id="Q9UBD5-1"/>
</dbReference>
<dbReference type="CCDS" id="CCDS5012.1">
    <molecule id="Q9UBD5-2"/>
</dbReference>
<dbReference type="CCDS" id="CCDS56440.1">
    <molecule id="Q9UBD5-3"/>
</dbReference>
<dbReference type="PIR" id="T12452">
    <property type="entry name" value="T12452"/>
</dbReference>
<dbReference type="RefSeq" id="NP_001184188.1">
    <molecule id="Q9UBD5-3"/>
    <property type="nucleotide sequence ID" value="NM_001197259.2"/>
</dbReference>
<dbReference type="RefSeq" id="NP_036513.2">
    <molecule id="Q9UBD5-1"/>
    <property type="nucleotide sequence ID" value="NM_012381.3"/>
</dbReference>
<dbReference type="RefSeq" id="NP_862820.1">
    <molecule id="Q9UBD5-2"/>
    <property type="nucleotide sequence ID" value="NM_181837.3"/>
</dbReference>
<dbReference type="PDB" id="5UJ8">
    <property type="method" value="X-ray"/>
    <property type="resolution" value="6.00 A"/>
    <property type="chains" value="A/B/C/D=1-711"/>
</dbReference>
<dbReference type="PDB" id="5UJM">
    <property type="method" value="EM"/>
    <property type="resolution" value="18.00 A"/>
    <property type="chains" value="C=1-711"/>
</dbReference>
<dbReference type="PDB" id="7CTE">
    <property type="method" value="EM"/>
    <property type="resolution" value="3.80 A"/>
    <property type="chains" value="C=1-711"/>
</dbReference>
<dbReference type="PDB" id="7CTF">
    <property type="method" value="EM"/>
    <property type="resolution" value="4.80 A"/>
    <property type="chains" value="C=1-711"/>
</dbReference>
<dbReference type="PDB" id="7CTG">
    <property type="method" value="EM"/>
    <property type="resolution" value="5.00 A"/>
    <property type="chains" value="C=1-711"/>
</dbReference>
<dbReference type="PDB" id="7JPO">
    <property type="method" value="EM"/>
    <property type="resolution" value="3.20 A"/>
    <property type="chains" value="C=1-711"/>
</dbReference>
<dbReference type="PDB" id="7JPP">
    <property type="method" value="EM"/>
    <property type="resolution" value="3.70 A"/>
    <property type="chains" value="C=1-711"/>
</dbReference>
<dbReference type="PDB" id="7JPQ">
    <property type="method" value="EM"/>
    <property type="resolution" value="3.50 A"/>
    <property type="chains" value="C=1-711"/>
</dbReference>
<dbReference type="PDB" id="7JPR">
    <property type="method" value="EM"/>
    <property type="resolution" value="4.00 A"/>
    <property type="chains" value="C=1-711"/>
</dbReference>
<dbReference type="PDB" id="7JPS">
    <property type="method" value="EM"/>
    <property type="resolution" value="4.40 A"/>
    <property type="chains" value="C=1-711"/>
</dbReference>
<dbReference type="PDB" id="8RWV">
    <property type="method" value="EM"/>
    <property type="resolution" value="6.68 A"/>
    <property type="chains" value="C=1-711"/>
</dbReference>
<dbReference type="PDB" id="8S0C">
    <property type="method" value="EM"/>
    <property type="resolution" value="4.00 A"/>
    <property type="chains" value="C=1-711"/>
</dbReference>
<dbReference type="PDB" id="8S0D">
    <property type="method" value="EM"/>
    <property type="resolution" value="3.60 A"/>
    <property type="chains" value="C=1-711"/>
</dbReference>
<dbReference type="PDB" id="8S0E">
    <property type="method" value="EM"/>
    <property type="resolution" value="3.80 A"/>
    <property type="chains" value="C=1-711"/>
</dbReference>
<dbReference type="PDB" id="8S0F">
    <property type="method" value="EM"/>
    <property type="resolution" value="4.10 A"/>
    <property type="chains" value="C=1-711"/>
</dbReference>
<dbReference type="PDBsum" id="5UJ8"/>
<dbReference type="PDBsum" id="5UJM"/>
<dbReference type="PDBsum" id="7CTE"/>
<dbReference type="PDBsum" id="7CTF"/>
<dbReference type="PDBsum" id="7CTG"/>
<dbReference type="PDBsum" id="7JPO"/>
<dbReference type="PDBsum" id="7JPP"/>
<dbReference type="PDBsum" id="7JPQ"/>
<dbReference type="PDBsum" id="7JPR"/>
<dbReference type="PDBsum" id="7JPS"/>
<dbReference type="PDBsum" id="8RWV"/>
<dbReference type="PDBsum" id="8S0C"/>
<dbReference type="PDBsum" id="8S0D"/>
<dbReference type="PDBsum" id="8S0E"/>
<dbReference type="PDBsum" id="8S0F"/>
<dbReference type="EMDB" id="EMD-19566"/>
<dbReference type="EMDB" id="EMD-19621"/>
<dbReference type="EMDB" id="EMD-19622"/>
<dbReference type="EMDB" id="EMD-19623"/>
<dbReference type="EMDB" id="EMD-19624"/>
<dbReference type="EMDB" id="EMD-22417"/>
<dbReference type="EMDB" id="EMD-22418"/>
<dbReference type="EMDB" id="EMD-22419"/>
<dbReference type="EMDB" id="EMD-22420"/>
<dbReference type="EMDB" id="EMD-22421"/>
<dbReference type="EMDB" id="EMD-30462"/>
<dbReference type="EMDB" id="EMD-30463"/>
<dbReference type="EMDB" id="EMD-30464"/>
<dbReference type="SMR" id="Q9UBD5"/>
<dbReference type="BioGRID" id="117130">
    <property type="interactions" value="102"/>
</dbReference>
<dbReference type="ComplexPortal" id="CPX-1880">
    <property type="entry name" value="Nuclear origin recognition complex"/>
</dbReference>
<dbReference type="CORUM" id="Q9UBD5"/>
<dbReference type="DIP" id="DIP-31735N"/>
<dbReference type="FunCoup" id="Q9UBD5">
    <property type="interactions" value="2640"/>
</dbReference>
<dbReference type="IntAct" id="Q9UBD5">
    <property type="interactions" value="61"/>
</dbReference>
<dbReference type="MINT" id="Q9UBD5"/>
<dbReference type="STRING" id="9606.ENSP00000257789"/>
<dbReference type="GlyGen" id="Q9UBD5">
    <property type="glycosylation" value="1 site"/>
</dbReference>
<dbReference type="iPTMnet" id="Q9UBD5"/>
<dbReference type="PhosphoSitePlus" id="Q9UBD5"/>
<dbReference type="BioMuta" id="ORC3"/>
<dbReference type="DMDM" id="8928268"/>
<dbReference type="jPOST" id="Q9UBD5"/>
<dbReference type="MassIVE" id="Q9UBD5"/>
<dbReference type="PaxDb" id="9606-ENSP00000257789"/>
<dbReference type="PeptideAtlas" id="Q9UBD5"/>
<dbReference type="ProteomicsDB" id="5643"/>
<dbReference type="ProteomicsDB" id="83947">
    <molecule id="Q9UBD5-1"/>
</dbReference>
<dbReference type="ProteomicsDB" id="83948">
    <molecule id="Q9UBD5-2"/>
</dbReference>
<dbReference type="Pumba" id="Q9UBD5"/>
<dbReference type="Antibodypedia" id="18665">
    <property type="antibodies" value="236 antibodies from 28 providers"/>
</dbReference>
<dbReference type="DNASU" id="23595"/>
<dbReference type="Ensembl" id="ENST00000257789.4">
    <molecule id="Q9UBD5-2"/>
    <property type="protein sequence ID" value="ENSP00000257789.4"/>
    <property type="gene ID" value="ENSG00000135336.17"/>
</dbReference>
<dbReference type="Ensembl" id="ENST00000392844.8">
    <molecule id="Q9UBD5-1"/>
    <property type="protein sequence ID" value="ENSP00000376586.3"/>
    <property type="gene ID" value="ENSG00000135336.17"/>
</dbReference>
<dbReference type="Ensembl" id="ENST00000546266.5">
    <molecule id="Q9UBD5-3"/>
    <property type="protein sequence ID" value="ENSP00000444695.1"/>
    <property type="gene ID" value="ENSG00000135336.17"/>
</dbReference>
<dbReference type="GeneID" id="23595"/>
<dbReference type="KEGG" id="hsa:23595"/>
<dbReference type="MANE-Select" id="ENST00000392844.8">
    <property type="protein sequence ID" value="ENSP00000376586.3"/>
    <property type="RefSeq nucleotide sequence ID" value="NM_012381.4"/>
    <property type="RefSeq protein sequence ID" value="NP_036513.2"/>
</dbReference>
<dbReference type="UCSC" id="uc003pmg.4">
    <molecule id="Q9UBD5-1"/>
    <property type="organism name" value="human"/>
</dbReference>
<dbReference type="AGR" id="HGNC:8489"/>
<dbReference type="CTD" id="23595"/>
<dbReference type="DisGeNET" id="23595"/>
<dbReference type="GeneCards" id="ORC3"/>
<dbReference type="HGNC" id="HGNC:8489">
    <property type="gene designation" value="ORC3"/>
</dbReference>
<dbReference type="HPA" id="ENSG00000135336">
    <property type="expression patterns" value="Low tissue specificity"/>
</dbReference>
<dbReference type="MalaCards" id="ORC3"/>
<dbReference type="MIM" id="604972">
    <property type="type" value="gene"/>
</dbReference>
<dbReference type="neXtProt" id="NX_Q9UBD5"/>
<dbReference type="OpenTargets" id="ENSG00000135336"/>
<dbReference type="PharmGKB" id="PA32810"/>
<dbReference type="VEuPathDB" id="HostDB:ENSG00000135336"/>
<dbReference type="eggNOG" id="KOG2538">
    <property type="taxonomic scope" value="Eukaryota"/>
</dbReference>
<dbReference type="GeneTree" id="ENSGT00390000011376"/>
<dbReference type="HOGENOM" id="CLU_015257_2_0_1"/>
<dbReference type="InParanoid" id="Q9UBD5"/>
<dbReference type="OMA" id="YCLMEHY"/>
<dbReference type="OrthoDB" id="10265211at2759"/>
<dbReference type="PAN-GO" id="Q9UBD5">
    <property type="GO annotations" value="5 GO annotations based on evolutionary models"/>
</dbReference>
<dbReference type="PhylomeDB" id="Q9UBD5"/>
<dbReference type="TreeFam" id="TF101093"/>
<dbReference type="BRENDA" id="3.6.4.B8">
    <property type="organism ID" value="2681"/>
</dbReference>
<dbReference type="PathwayCommons" id="Q9UBD5"/>
<dbReference type="Reactome" id="R-HSA-113507">
    <property type="pathway name" value="E2F-enabled inhibition of pre-replication complex formation"/>
</dbReference>
<dbReference type="Reactome" id="R-HSA-176187">
    <property type="pathway name" value="Activation of ATR in response to replication stress"/>
</dbReference>
<dbReference type="Reactome" id="R-HSA-68616">
    <property type="pathway name" value="Assembly of the ORC complex at the origin of replication"/>
</dbReference>
<dbReference type="Reactome" id="R-HSA-68689">
    <property type="pathway name" value="CDC6 association with the ORC:origin complex"/>
</dbReference>
<dbReference type="Reactome" id="R-HSA-68867">
    <property type="pathway name" value="Assembly of the pre-replicative complex"/>
</dbReference>
<dbReference type="Reactome" id="R-HSA-68949">
    <property type="pathway name" value="Orc1 removal from chromatin"/>
</dbReference>
<dbReference type="Reactome" id="R-HSA-68962">
    <property type="pathway name" value="Activation of the pre-replicative complex"/>
</dbReference>
<dbReference type="SignaLink" id="Q9UBD5"/>
<dbReference type="SIGNOR" id="Q9UBD5"/>
<dbReference type="BioGRID-ORCS" id="23595">
    <property type="hits" value="404 hits in 1165 CRISPR screens"/>
</dbReference>
<dbReference type="ChiTaRS" id="ORC3">
    <property type="organism name" value="human"/>
</dbReference>
<dbReference type="GeneWiki" id="ORC3"/>
<dbReference type="GeneWiki" id="ORC3L"/>
<dbReference type="GenomeRNAi" id="23595"/>
<dbReference type="Pharos" id="Q9UBD5">
    <property type="development level" value="Tbio"/>
</dbReference>
<dbReference type="PRO" id="PR:Q9UBD5"/>
<dbReference type="Proteomes" id="UP000005640">
    <property type="component" value="Chromosome 6"/>
</dbReference>
<dbReference type="RNAct" id="Q9UBD5">
    <property type="molecule type" value="protein"/>
</dbReference>
<dbReference type="Bgee" id="ENSG00000135336">
    <property type="expression patterns" value="Expressed in triceps brachii and 205 other cell types or tissues"/>
</dbReference>
<dbReference type="ExpressionAtlas" id="Q9UBD5">
    <property type="expression patterns" value="baseline and differential"/>
</dbReference>
<dbReference type="GO" id="GO:0000785">
    <property type="term" value="C:chromatin"/>
    <property type="evidence" value="ECO:0000314"/>
    <property type="project" value="UniProtKB"/>
</dbReference>
<dbReference type="GO" id="GO:0000781">
    <property type="term" value="C:chromosome, telomeric region"/>
    <property type="evidence" value="ECO:0007005"/>
    <property type="project" value="BHF-UCL"/>
</dbReference>
<dbReference type="GO" id="GO:0031261">
    <property type="term" value="C:DNA replication preinitiation complex"/>
    <property type="evidence" value="ECO:0000318"/>
    <property type="project" value="GO_Central"/>
</dbReference>
<dbReference type="GO" id="GO:0016604">
    <property type="term" value="C:nuclear body"/>
    <property type="evidence" value="ECO:0000314"/>
    <property type="project" value="HPA"/>
</dbReference>
<dbReference type="GO" id="GO:0005664">
    <property type="term" value="C:nuclear origin of replication recognition complex"/>
    <property type="evidence" value="ECO:0000314"/>
    <property type="project" value="UniProtKB"/>
</dbReference>
<dbReference type="GO" id="GO:0005656">
    <property type="term" value="C:nuclear pre-replicative complex"/>
    <property type="evidence" value="ECO:0000318"/>
    <property type="project" value="GO_Central"/>
</dbReference>
<dbReference type="GO" id="GO:0005654">
    <property type="term" value="C:nucleoplasm"/>
    <property type="evidence" value="ECO:0000314"/>
    <property type="project" value="HPA"/>
</dbReference>
<dbReference type="GO" id="GO:0005634">
    <property type="term" value="C:nucleus"/>
    <property type="evidence" value="ECO:0000303"/>
    <property type="project" value="ComplexPortal"/>
</dbReference>
<dbReference type="GO" id="GO:0000808">
    <property type="term" value="C:origin recognition complex"/>
    <property type="evidence" value="ECO:0000314"/>
    <property type="project" value="UniProtKB"/>
</dbReference>
<dbReference type="GO" id="GO:0003688">
    <property type="term" value="F:DNA replication origin binding"/>
    <property type="evidence" value="ECO:0000318"/>
    <property type="project" value="GO_Central"/>
</dbReference>
<dbReference type="GO" id="GO:0006260">
    <property type="term" value="P:DNA replication"/>
    <property type="evidence" value="ECO:0000304"/>
    <property type="project" value="ProtInc"/>
</dbReference>
<dbReference type="GO" id="GO:0006270">
    <property type="term" value="P:DNA replication initiation"/>
    <property type="evidence" value="ECO:0000314"/>
    <property type="project" value="ComplexPortal"/>
</dbReference>
<dbReference type="GO" id="GO:0014009">
    <property type="term" value="P:glial cell proliferation"/>
    <property type="evidence" value="ECO:0007669"/>
    <property type="project" value="Ensembl"/>
</dbReference>
<dbReference type="GO" id="GO:0061351">
    <property type="term" value="P:neural precursor cell proliferation"/>
    <property type="evidence" value="ECO:0007669"/>
    <property type="project" value="Ensembl"/>
</dbReference>
<dbReference type="GO" id="GO:0006275">
    <property type="term" value="P:regulation of DNA replication"/>
    <property type="evidence" value="ECO:0000314"/>
    <property type="project" value="UniProtKB"/>
</dbReference>
<dbReference type="CDD" id="cd20704">
    <property type="entry name" value="Orc3"/>
    <property type="match status" value="1"/>
</dbReference>
<dbReference type="InterPro" id="IPR020795">
    <property type="entry name" value="ORC3"/>
</dbReference>
<dbReference type="InterPro" id="IPR045663">
    <property type="entry name" value="ORC3_ins"/>
</dbReference>
<dbReference type="InterPro" id="IPR045667">
    <property type="entry name" value="ORC3_N"/>
</dbReference>
<dbReference type="InterPro" id="IPR040855">
    <property type="entry name" value="ORC_WH_C"/>
</dbReference>
<dbReference type="PANTHER" id="PTHR12748">
    <property type="entry name" value="ORIGIN RECOGNITION COMPLEX SUBUNIT 3"/>
    <property type="match status" value="1"/>
</dbReference>
<dbReference type="PANTHER" id="PTHR12748:SF1">
    <property type="entry name" value="ORIGIN RECOGNITION COMPLEX SUBUNIT 3"/>
    <property type="match status" value="1"/>
</dbReference>
<dbReference type="Pfam" id="PF19675">
    <property type="entry name" value="ORC3_ins"/>
    <property type="match status" value="1"/>
</dbReference>
<dbReference type="Pfam" id="PF07034">
    <property type="entry name" value="ORC3_N"/>
    <property type="match status" value="1"/>
</dbReference>
<dbReference type="Pfam" id="PF18137">
    <property type="entry name" value="ORC_WH_C"/>
    <property type="match status" value="1"/>
</dbReference>
<comment type="function">
    <text evidence="2 3">Component of the origin recognition complex (ORC) that binds origins of replication. DNA-binding is ATP-dependent. The specific DNA sequences that define origins of replication have not been identified yet. ORC is required to assemble the pre-replication complex necessary to initiate DNA replication. Binds histone H3 and H4 trimethylation marks H3K9me3, H3K27me3 and H4K20me3.</text>
</comment>
<comment type="subunit">
    <text evidence="1">Component of ORC, a complex composed of at least 6 subunits: ORC1, ORC2, ORC3, ORC4, ORC5 and ORC6. ORC is regulated in a cell-cycle dependent manner. It is sequentially assembled at the exit from anaphase of mitosis and disassembled as cells enter S phase.</text>
</comment>
<comment type="interaction">
    <interactant intactId="EBI-374916">
        <id>Q9UBD5</id>
    </interactant>
    <interactant intactId="EBI-374847">
        <id>Q13415</id>
        <label>ORC1</label>
    </interactant>
    <organismsDiffer>false</organismsDiffer>
    <experiments>16</experiments>
</comment>
<comment type="interaction">
    <interactant intactId="EBI-374916">
        <id>Q9UBD5</id>
    </interactant>
    <interactant intactId="EBI-374957">
        <id>Q13416</id>
        <label>ORC2</label>
    </interactant>
    <organismsDiffer>false</organismsDiffer>
    <experiments>28</experiments>
</comment>
<comment type="interaction">
    <interactant intactId="EBI-374916">
        <id>Q9UBD5</id>
    </interactant>
    <interactant intactId="EBI-374889">
        <id>O43929</id>
        <label>ORC4</label>
    </interactant>
    <organismsDiffer>false</organismsDiffer>
    <experiments>12</experiments>
</comment>
<comment type="interaction">
    <interactant intactId="EBI-374916">
        <id>Q9UBD5</id>
    </interactant>
    <interactant intactId="EBI-374928">
        <id>O43913</id>
        <label>ORC5</label>
    </interactant>
    <organismsDiffer>false</organismsDiffer>
    <experiments>15</experiments>
</comment>
<comment type="interaction">
    <interactant intactId="EBI-374916">
        <id>Q9UBD5</id>
    </interactant>
    <interactant intactId="EBI-374840">
        <id>Q9Y5N6</id>
        <label>ORC6</label>
    </interactant>
    <organismsDiffer>false</organismsDiffer>
    <experiments>4</experiments>
</comment>
<comment type="subcellular location">
    <subcellularLocation>
        <location evidence="3">Nucleus</location>
    </subcellularLocation>
    <subcellularLocation>
        <location evidence="3">Chromosome</location>
    </subcellularLocation>
</comment>
<comment type="alternative products">
    <event type="alternative splicing"/>
    <isoform>
        <id>Q9UBD5-1</id>
        <name>1</name>
        <sequence type="displayed"/>
    </isoform>
    <isoform>
        <id>Q9UBD5-2</id>
        <name>2</name>
        <sequence type="described" ref="VSP_017129"/>
    </isoform>
    <isoform>
        <id>Q9UBD5-3</id>
        <name>3</name>
        <sequence type="described" ref="VSP_044893"/>
    </isoform>
</comment>
<comment type="PTM">
    <text evidence="3">Multi-mono-ubiquitinated by OBI1; ubiquitination is important for efficient DNA replication origin site activation. Ubiquitination levels are low in mitotic and early G1-phAse cells and are induced in late G1-/early S-phase, peaking in S-phase and decrease toward the end of the cell cycle.</text>
</comment>
<comment type="similarity">
    <text evidence="8">Belongs to the ORC3 family.</text>
</comment>
<protein>
    <recommendedName>
        <fullName>Origin recognition complex subunit 3</fullName>
    </recommendedName>
    <alternativeName>
        <fullName>Origin recognition complex subunit Latheo</fullName>
    </alternativeName>
</protein>
<reference key="1">
    <citation type="submission" date="1999-03" db="EMBL/GenBank/DDBJ databases">
        <authorList>
            <person name="Tugal T."/>
            <person name="Zou-Yang X.H."/>
            <person name="Gavin K."/>
            <person name="Pappin D."/>
            <person name="Canas B."/>
            <person name="Kobayashi R."/>
            <person name="Hunt T."/>
            <person name="Stillman B."/>
        </authorList>
    </citation>
    <scope>NUCLEOTIDE SEQUENCE [MRNA] (ISOFORM 1)</scope>
</reference>
<reference key="2">
    <citation type="submission" date="1999-02" db="EMBL/GenBank/DDBJ databases">
        <title>cDNA cloning of a homolog for Saccharomyces cerevisiae ORC3 from Homo sapiens.</title>
        <authorList>
            <person name="Dean F.B."/>
            <person name="O'Donnell M."/>
        </authorList>
    </citation>
    <scope>NUCLEOTIDE SEQUENCE [MRNA] (ISOFORM 1)</scope>
</reference>
<reference key="3">
    <citation type="journal article" date="1999" name="Neuron">
        <title>Latheo encodes a subunit of the origin recognition complex and disrupts neuronal proliferation and adult olfactory memory when mutant.</title>
        <authorList>
            <person name="Pinto S."/>
            <person name="Quintana D.G."/>
            <person name="Smith P."/>
            <person name="Mihalek R.M."/>
            <person name="Hou Z.-H."/>
            <person name="Boynton S."/>
            <person name="Jones C.J."/>
            <person name="Handricks M."/>
            <person name="Velinzon K."/>
            <person name="Wohlschlegel J.A."/>
            <person name="Austin R.J."/>
            <person name="Lane W.S."/>
            <person name="Dutta A."/>
            <person name="Tully T."/>
        </authorList>
    </citation>
    <scope>NUCLEOTIDE SEQUENCE [MRNA] (ISOFORM 1)</scope>
</reference>
<reference key="4">
    <citation type="journal article" date="2001" name="Genome Res.">
        <title>Towards a catalog of human genes and proteins: sequencing and analysis of 500 novel complete protein coding human cDNAs.</title>
        <authorList>
            <person name="Wiemann S."/>
            <person name="Weil B."/>
            <person name="Wellenreuther R."/>
            <person name="Gassenhuber J."/>
            <person name="Glassl S."/>
            <person name="Ansorge W."/>
            <person name="Boecher M."/>
            <person name="Bloecker H."/>
            <person name="Bauersachs S."/>
            <person name="Blum H."/>
            <person name="Lauber J."/>
            <person name="Duesterhoeft A."/>
            <person name="Beyer A."/>
            <person name="Koehrer K."/>
            <person name="Strack N."/>
            <person name="Mewes H.-W."/>
            <person name="Ottenwaelder B."/>
            <person name="Obermaier B."/>
            <person name="Tampe J."/>
            <person name="Heubner D."/>
            <person name="Wambutt R."/>
            <person name="Korn B."/>
            <person name="Klein M."/>
            <person name="Poustka A."/>
        </authorList>
    </citation>
    <scope>NUCLEOTIDE SEQUENCE [LARGE SCALE MRNA] (ISOFORM 2)</scope>
    <source>
        <tissue>Brain</tissue>
    </source>
</reference>
<reference key="5">
    <citation type="submission" date="2005-04" db="EMBL/GenBank/DDBJ databases">
        <authorList>
            <person name="Suzuki Y."/>
            <person name="Sugano S."/>
            <person name="Totoki Y."/>
            <person name="Toyoda A."/>
            <person name="Takeda T."/>
            <person name="Sakaki Y."/>
            <person name="Tanaka A."/>
            <person name="Yokoyama S."/>
        </authorList>
    </citation>
    <scope>NUCLEOTIDE SEQUENCE [LARGE SCALE MRNA] (ISOFORM 1)</scope>
    <source>
        <tissue>Liver</tissue>
    </source>
</reference>
<reference key="6">
    <citation type="journal article" date="2004" name="Nat. Genet.">
        <title>Complete sequencing and characterization of 21,243 full-length human cDNAs.</title>
        <authorList>
            <person name="Ota T."/>
            <person name="Suzuki Y."/>
            <person name="Nishikawa T."/>
            <person name="Otsuki T."/>
            <person name="Sugiyama T."/>
            <person name="Irie R."/>
            <person name="Wakamatsu A."/>
            <person name="Hayashi K."/>
            <person name="Sato H."/>
            <person name="Nagai K."/>
            <person name="Kimura K."/>
            <person name="Makita H."/>
            <person name="Sekine M."/>
            <person name="Obayashi M."/>
            <person name="Nishi T."/>
            <person name="Shibahara T."/>
            <person name="Tanaka T."/>
            <person name="Ishii S."/>
            <person name="Yamamoto J."/>
            <person name="Saito K."/>
            <person name="Kawai Y."/>
            <person name="Isono Y."/>
            <person name="Nakamura Y."/>
            <person name="Nagahari K."/>
            <person name="Murakami K."/>
            <person name="Yasuda T."/>
            <person name="Iwayanagi T."/>
            <person name="Wagatsuma M."/>
            <person name="Shiratori A."/>
            <person name="Sudo H."/>
            <person name="Hosoiri T."/>
            <person name="Kaku Y."/>
            <person name="Kodaira H."/>
            <person name="Kondo H."/>
            <person name="Sugawara M."/>
            <person name="Takahashi M."/>
            <person name="Kanda K."/>
            <person name="Yokoi T."/>
            <person name="Furuya T."/>
            <person name="Kikkawa E."/>
            <person name="Omura Y."/>
            <person name="Abe K."/>
            <person name="Kamihara K."/>
            <person name="Katsuta N."/>
            <person name="Sato K."/>
            <person name="Tanikawa M."/>
            <person name="Yamazaki M."/>
            <person name="Ninomiya K."/>
            <person name="Ishibashi T."/>
            <person name="Yamashita H."/>
            <person name="Murakawa K."/>
            <person name="Fujimori K."/>
            <person name="Tanai H."/>
            <person name="Kimata M."/>
            <person name="Watanabe M."/>
            <person name="Hiraoka S."/>
            <person name="Chiba Y."/>
            <person name="Ishida S."/>
            <person name="Ono Y."/>
            <person name="Takiguchi S."/>
            <person name="Watanabe S."/>
            <person name="Yosida M."/>
            <person name="Hotuta T."/>
            <person name="Kusano J."/>
            <person name="Kanehori K."/>
            <person name="Takahashi-Fujii A."/>
            <person name="Hara H."/>
            <person name="Tanase T.-O."/>
            <person name="Nomura Y."/>
            <person name="Togiya S."/>
            <person name="Komai F."/>
            <person name="Hara R."/>
            <person name="Takeuchi K."/>
            <person name="Arita M."/>
            <person name="Imose N."/>
            <person name="Musashino K."/>
            <person name="Yuuki H."/>
            <person name="Oshima A."/>
            <person name="Sasaki N."/>
            <person name="Aotsuka S."/>
            <person name="Yoshikawa Y."/>
            <person name="Matsunawa H."/>
            <person name="Ichihara T."/>
            <person name="Shiohata N."/>
            <person name="Sano S."/>
            <person name="Moriya S."/>
            <person name="Momiyama H."/>
            <person name="Satoh N."/>
            <person name="Takami S."/>
            <person name="Terashima Y."/>
            <person name="Suzuki O."/>
            <person name="Nakagawa S."/>
            <person name="Senoh A."/>
            <person name="Mizoguchi H."/>
            <person name="Goto Y."/>
            <person name="Shimizu F."/>
            <person name="Wakebe H."/>
            <person name="Hishigaki H."/>
            <person name="Watanabe T."/>
            <person name="Sugiyama A."/>
            <person name="Takemoto M."/>
            <person name="Kawakami B."/>
            <person name="Yamazaki M."/>
            <person name="Watanabe K."/>
            <person name="Kumagai A."/>
            <person name="Itakura S."/>
            <person name="Fukuzumi Y."/>
            <person name="Fujimori Y."/>
            <person name="Komiyama M."/>
            <person name="Tashiro H."/>
            <person name="Tanigami A."/>
            <person name="Fujiwara T."/>
            <person name="Ono T."/>
            <person name="Yamada K."/>
            <person name="Fujii Y."/>
            <person name="Ozaki K."/>
            <person name="Hirao M."/>
            <person name="Ohmori Y."/>
            <person name="Kawabata A."/>
            <person name="Hikiji T."/>
            <person name="Kobatake N."/>
            <person name="Inagaki H."/>
            <person name="Ikema Y."/>
            <person name="Okamoto S."/>
            <person name="Okitani R."/>
            <person name="Kawakami T."/>
            <person name="Noguchi S."/>
            <person name="Itoh T."/>
            <person name="Shigeta K."/>
            <person name="Senba T."/>
            <person name="Matsumura K."/>
            <person name="Nakajima Y."/>
            <person name="Mizuno T."/>
            <person name="Morinaga M."/>
            <person name="Sasaki M."/>
            <person name="Togashi T."/>
            <person name="Oyama M."/>
            <person name="Hata H."/>
            <person name="Watanabe M."/>
            <person name="Komatsu T."/>
            <person name="Mizushima-Sugano J."/>
            <person name="Satoh T."/>
            <person name="Shirai Y."/>
            <person name="Takahashi Y."/>
            <person name="Nakagawa K."/>
            <person name="Okumura K."/>
            <person name="Nagase T."/>
            <person name="Nomura N."/>
            <person name="Kikuchi H."/>
            <person name="Masuho Y."/>
            <person name="Yamashita R."/>
            <person name="Nakai K."/>
            <person name="Yada T."/>
            <person name="Nakamura Y."/>
            <person name="Ohara O."/>
            <person name="Isogai T."/>
            <person name="Sugano S."/>
        </authorList>
    </citation>
    <scope>NUCLEOTIDE SEQUENCE [LARGE SCALE MRNA] (ISOFORM 3)</scope>
    <source>
        <tissue>Thymus</tissue>
    </source>
</reference>
<reference key="7">
    <citation type="submission" date="2004-05" db="EMBL/GenBank/DDBJ databases">
        <authorList>
            <consortium name="NIEHS SNPs program"/>
        </authorList>
    </citation>
    <scope>NUCLEOTIDE SEQUENCE [GENOMIC DNA]</scope>
    <scope>VARIANTS LYS-94; ARG-126; ILE-217; VAL-247 AND THR-626</scope>
</reference>
<reference key="8">
    <citation type="journal article" date="2003" name="Nature">
        <title>The DNA sequence and analysis of human chromosome 6.</title>
        <authorList>
            <person name="Mungall A.J."/>
            <person name="Palmer S.A."/>
            <person name="Sims S.K."/>
            <person name="Edwards C.A."/>
            <person name="Ashurst J.L."/>
            <person name="Wilming L."/>
            <person name="Jones M.C."/>
            <person name="Horton R."/>
            <person name="Hunt S.E."/>
            <person name="Scott C.E."/>
            <person name="Gilbert J.G.R."/>
            <person name="Clamp M.E."/>
            <person name="Bethel G."/>
            <person name="Milne S."/>
            <person name="Ainscough R."/>
            <person name="Almeida J.P."/>
            <person name="Ambrose K.D."/>
            <person name="Andrews T.D."/>
            <person name="Ashwell R.I.S."/>
            <person name="Babbage A.K."/>
            <person name="Bagguley C.L."/>
            <person name="Bailey J."/>
            <person name="Banerjee R."/>
            <person name="Barker D.J."/>
            <person name="Barlow K.F."/>
            <person name="Bates K."/>
            <person name="Beare D.M."/>
            <person name="Beasley H."/>
            <person name="Beasley O."/>
            <person name="Bird C.P."/>
            <person name="Blakey S.E."/>
            <person name="Bray-Allen S."/>
            <person name="Brook J."/>
            <person name="Brown A.J."/>
            <person name="Brown J.Y."/>
            <person name="Burford D.C."/>
            <person name="Burrill W."/>
            <person name="Burton J."/>
            <person name="Carder C."/>
            <person name="Carter N.P."/>
            <person name="Chapman J.C."/>
            <person name="Clark S.Y."/>
            <person name="Clark G."/>
            <person name="Clee C.M."/>
            <person name="Clegg S."/>
            <person name="Cobley V."/>
            <person name="Collier R.E."/>
            <person name="Collins J.E."/>
            <person name="Colman L.K."/>
            <person name="Corby N.R."/>
            <person name="Coville G.J."/>
            <person name="Culley K.M."/>
            <person name="Dhami P."/>
            <person name="Davies J."/>
            <person name="Dunn M."/>
            <person name="Earthrowl M.E."/>
            <person name="Ellington A.E."/>
            <person name="Evans K.A."/>
            <person name="Faulkner L."/>
            <person name="Francis M.D."/>
            <person name="Frankish A."/>
            <person name="Frankland J."/>
            <person name="French L."/>
            <person name="Garner P."/>
            <person name="Garnett J."/>
            <person name="Ghori M.J."/>
            <person name="Gilby L.M."/>
            <person name="Gillson C.J."/>
            <person name="Glithero R.J."/>
            <person name="Grafham D.V."/>
            <person name="Grant M."/>
            <person name="Gribble S."/>
            <person name="Griffiths C."/>
            <person name="Griffiths M.N.D."/>
            <person name="Hall R."/>
            <person name="Halls K.S."/>
            <person name="Hammond S."/>
            <person name="Harley J.L."/>
            <person name="Hart E.A."/>
            <person name="Heath P.D."/>
            <person name="Heathcott R."/>
            <person name="Holmes S.J."/>
            <person name="Howden P.J."/>
            <person name="Howe K.L."/>
            <person name="Howell G.R."/>
            <person name="Huckle E."/>
            <person name="Humphray S.J."/>
            <person name="Humphries M.D."/>
            <person name="Hunt A.R."/>
            <person name="Johnson C.M."/>
            <person name="Joy A.A."/>
            <person name="Kay M."/>
            <person name="Keenan S.J."/>
            <person name="Kimberley A.M."/>
            <person name="King A."/>
            <person name="Laird G.K."/>
            <person name="Langford C."/>
            <person name="Lawlor S."/>
            <person name="Leongamornlert D.A."/>
            <person name="Leversha M."/>
            <person name="Lloyd C.R."/>
            <person name="Lloyd D.M."/>
            <person name="Loveland J.E."/>
            <person name="Lovell J."/>
            <person name="Martin S."/>
            <person name="Mashreghi-Mohammadi M."/>
            <person name="Maslen G.L."/>
            <person name="Matthews L."/>
            <person name="McCann O.T."/>
            <person name="McLaren S.J."/>
            <person name="McLay K."/>
            <person name="McMurray A."/>
            <person name="Moore M.J.F."/>
            <person name="Mullikin J.C."/>
            <person name="Niblett D."/>
            <person name="Nickerson T."/>
            <person name="Novik K.L."/>
            <person name="Oliver K."/>
            <person name="Overton-Larty E.K."/>
            <person name="Parker A."/>
            <person name="Patel R."/>
            <person name="Pearce A.V."/>
            <person name="Peck A.I."/>
            <person name="Phillimore B.J.C.T."/>
            <person name="Phillips S."/>
            <person name="Plumb R.W."/>
            <person name="Porter K.M."/>
            <person name="Ramsey Y."/>
            <person name="Ranby S.A."/>
            <person name="Rice C.M."/>
            <person name="Ross M.T."/>
            <person name="Searle S.M."/>
            <person name="Sehra H.K."/>
            <person name="Sheridan E."/>
            <person name="Skuce C.D."/>
            <person name="Smith S."/>
            <person name="Smith M."/>
            <person name="Spraggon L."/>
            <person name="Squares S.L."/>
            <person name="Steward C.A."/>
            <person name="Sycamore N."/>
            <person name="Tamlyn-Hall G."/>
            <person name="Tester J."/>
            <person name="Theaker A.J."/>
            <person name="Thomas D.W."/>
            <person name="Thorpe A."/>
            <person name="Tracey A."/>
            <person name="Tromans A."/>
            <person name="Tubby B."/>
            <person name="Wall M."/>
            <person name="Wallis J.M."/>
            <person name="West A.P."/>
            <person name="White S.S."/>
            <person name="Whitehead S.L."/>
            <person name="Whittaker H."/>
            <person name="Wild A."/>
            <person name="Willey D.J."/>
            <person name="Wilmer T.E."/>
            <person name="Wood J.M."/>
            <person name="Wray P.W."/>
            <person name="Wyatt J.C."/>
            <person name="Young L."/>
            <person name="Younger R.M."/>
            <person name="Bentley D.R."/>
            <person name="Coulson A."/>
            <person name="Durbin R.M."/>
            <person name="Hubbard T."/>
            <person name="Sulston J.E."/>
            <person name="Dunham I."/>
            <person name="Rogers J."/>
            <person name="Beck S."/>
        </authorList>
    </citation>
    <scope>NUCLEOTIDE SEQUENCE [LARGE SCALE GENOMIC DNA]</scope>
</reference>
<reference key="9">
    <citation type="journal article" date="2004" name="Genome Res.">
        <title>The status, quality, and expansion of the NIH full-length cDNA project: the Mammalian Gene Collection (MGC).</title>
        <authorList>
            <consortium name="The MGC Project Team"/>
        </authorList>
    </citation>
    <scope>NUCLEOTIDE SEQUENCE [LARGE SCALE MRNA] (ISOFORM 1)</scope>
    <scope>NUCLEOTIDE SEQUENCE [LARGE SCALE MRNA] OF 1-671 (ISOFORM 2)</scope>
    <source>
        <tissue>Testis</tissue>
        <tissue>Uterus</tissue>
    </source>
</reference>
<reference key="10">
    <citation type="submission" date="1996-03" db="EMBL/GenBank/DDBJ databases">
        <authorList>
            <person name="Mihalek R."/>
            <person name="Homanics G.E."/>
        </authorList>
    </citation>
    <scope>NUCLEOTIDE SEQUENCE [MRNA] OF 156-542 (ISOFORM 1)</scope>
    <source>
        <tissue>Brain</tissue>
    </source>
</reference>
<reference key="11">
    <citation type="journal article" date="2003" name="J. Biol. Chem.">
        <title>The ORC1 cycle in human cells: II. Dynamic changes in the human ORC complex during the cell cycle.</title>
        <authorList>
            <person name="Ohta S."/>
            <person name="Tatsumi Y."/>
            <person name="Fujita M."/>
            <person name="Tsurimoto T."/>
            <person name="Obuse C."/>
        </authorList>
    </citation>
    <scope>IDENTIFICATION IN THE ORC COMPLEX</scope>
    <scope>IDENTIFICATION BY MASS SPECTROMETRY</scope>
    <scope>ASSEMBLY OF THE ORC COMPLEX</scope>
</reference>
<reference key="12">
    <citation type="journal article" date="2007" name="J. Biol. Chem.">
        <title>ATP-dependent assembly of the human origin recognition complex.</title>
        <authorList>
            <person name="Siddiqui K."/>
            <person name="Stillman B."/>
        </authorList>
    </citation>
    <scope>RECONSTITUTION OF THE ORC COMPLEX</scope>
    <scope>DISASSEMBLY OF THE ORC COMPLEX</scope>
</reference>
<reference key="13">
    <citation type="journal article" date="2007" name="Science">
        <title>ATM and ATR substrate analysis reveals extensive protein networks responsive to DNA damage.</title>
        <authorList>
            <person name="Matsuoka S."/>
            <person name="Ballif B.A."/>
            <person name="Smogorzewska A."/>
            <person name="McDonald E.R. III"/>
            <person name="Hurov K.E."/>
            <person name="Luo J."/>
            <person name="Bakalarski C.E."/>
            <person name="Zhao Z."/>
            <person name="Solimini N."/>
            <person name="Lerenthal Y."/>
            <person name="Shiloh Y."/>
            <person name="Gygi S.P."/>
            <person name="Elledge S.J."/>
        </authorList>
    </citation>
    <scope>PHOSPHORYLATION [LARGE SCALE ANALYSIS] AT SER-516</scope>
    <scope>IDENTIFICATION BY MASS SPECTROMETRY [LARGE SCALE ANALYSIS]</scope>
    <source>
        <tissue>Embryonic kidney</tissue>
    </source>
</reference>
<reference key="14">
    <citation type="journal article" date="2008" name="Proc. Natl. Acad. Sci. U.S.A.">
        <title>A quantitative atlas of mitotic phosphorylation.</title>
        <authorList>
            <person name="Dephoure N."/>
            <person name="Zhou C."/>
            <person name="Villen J."/>
            <person name="Beausoleil S.A."/>
            <person name="Bakalarski C.E."/>
            <person name="Elledge S.J."/>
            <person name="Gygi S.P."/>
        </authorList>
    </citation>
    <scope>PHOSPHORYLATION [LARGE SCALE ANALYSIS] AT SER-23</scope>
    <scope>IDENTIFICATION BY MASS SPECTROMETRY [LARGE SCALE ANALYSIS]</scope>
    <source>
        <tissue>Cervix carcinoma</tissue>
    </source>
</reference>
<reference key="15">
    <citation type="journal article" date="2011" name="BMC Syst. Biol.">
        <title>Initial characterization of the human central proteome.</title>
        <authorList>
            <person name="Burkard T.R."/>
            <person name="Planyavsky M."/>
            <person name="Kaupe I."/>
            <person name="Breitwieser F.P."/>
            <person name="Buerckstuemmer T."/>
            <person name="Bennett K.L."/>
            <person name="Superti-Furga G."/>
            <person name="Colinge J."/>
        </authorList>
    </citation>
    <scope>IDENTIFICATION BY MASS SPECTROMETRY [LARGE SCALE ANALYSIS]</scope>
</reference>
<reference key="16">
    <citation type="journal article" date="2012" name="J. Biol. Chem.">
        <title>Leucine-rich repeat and WD repeat-containing protein 1 is recruited to pericentric heterochromatin by trimethylated lysine 9 of histone H3 and maintains heterochromatin silencing.</title>
        <authorList>
            <person name="Chan K.M."/>
            <person name="Zhang Z."/>
        </authorList>
    </citation>
    <scope>FUNCTION</scope>
    <scope>BINDING TO HISTONE H3 AND H4 TRIMETHYLATION MARKS</scope>
</reference>
<reference key="17">
    <citation type="journal article" date="2013" name="J. Proteome Res.">
        <title>Toward a comprehensive characterization of a human cancer cell phosphoproteome.</title>
        <authorList>
            <person name="Zhou H."/>
            <person name="Di Palma S."/>
            <person name="Preisinger C."/>
            <person name="Peng M."/>
            <person name="Polat A.N."/>
            <person name="Heck A.J."/>
            <person name="Mohammed S."/>
        </authorList>
    </citation>
    <scope>PHOSPHORYLATION [LARGE SCALE ANALYSIS] AT SER-23</scope>
    <scope>IDENTIFICATION BY MASS SPECTROMETRY [LARGE SCALE ANALYSIS]</scope>
    <source>
        <tissue>Erythroleukemia</tissue>
    </source>
</reference>
<reference key="18">
    <citation type="journal article" date="2019" name="Nat. Commun.">
        <title>The ORC ubiquitin ligase OBI1 promotes DNA replication origin firing.</title>
        <authorList>
            <person name="Coulombe P."/>
            <person name="Nassar J."/>
            <person name="Peiffer I."/>
            <person name="Stanojcic S."/>
            <person name="Sterkers Y."/>
            <person name="Delamarre A."/>
            <person name="Bocquet S."/>
            <person name="Mechali M."/>
        </authorList>
    </citation>
    <scope>FUNCTION</scope>
    <scope>UBIQUITINATION</scope>
    <scope>SUBCELLULAR LOCATION</scope>
</reference>
<evidence type="ECO:0000269" key="1">
    <source>
    </source>
</evidence>
<evidence type="ECO:0000269" key="2">
    <source>
    </source>
</evidence>
<evidence type="ECO:0000269" key="3">
    <source>
    </source>
</evidence>
<evidence type="ECO:0000269" key="4">
    <source ref="7"/>
</evidence>
<evidence type="ECO:0000303" key="5">
    <source>
    </source>
</evidence>
<evidence type="ECO:0000303" key="6">
    <source>
    </source>
</evidence>
<evidence type="ECO:0000303" key="7">
    <source>
    </source>
</evidence>
<evidence type="ECO:0000305" key="8"/>
<evidence type="ECO:0007744" key="9">
    <source>
    </source>
</evidence>
<evidence type="ECO:0007744" key="10">
    <source>
    </source>
</evidence>
<evidence type="ECO:0007744" key="11">
    <source>
    </source>
</evidence>
<evidence type="ECO:0007829" key="12">
    <source>
        <dbReference type="PDB" id="7JPO"/>
    </source>
</evidence>
<evidence type="ECO:0007829" key="13">
    <source>
        <dbReference type="PDB" id="7JPQ"/>
    </source>
</evidence>
<organism>
    <name type="scientific">Homo sapiens</name>
    <name type="common">Human</name>
    <dbReference type="NCBI Taxonomy" id="9606"/>
    <lineage>
        <taxon>Eukaryota</taxon>
        <taxon>Metazoa</taxon>
        <taxon>Chordata</taxon>
        <taxon>Craniata</taxon>
        <taxon>Vertebrata</taxon>
        <taxon>Euteleostomi</taxon>
        <taxon>Mammalia</taxon>
        <taxon>Eutheria</taxon>
        <taxon>Euarchontoglires</taxon>
        <taxon>Primates</taxon>
        <taxon>Haplorrhini</taxon>
        <taxon>Catarrhini</taxon>
        <taxon>Hominidae</taxon>
        <taxon>Homo</taxon>
    </lineage>
</organism>
<accession>Q9UBD5</accession>
<accession>A2A2T5</accession>
<accession>B4E025</accession>
<accession>Q13565</accession>
<accession>Q53GY6</accession>
<accession>Q5T159</accession>
<accession>Q6IUY7</accession>
<accession>Q86TN5</accession>
<accession>Q9UG44</accession>
<accession>Q9UNT6</accession>
<gene>
    <name type="primary">ORC3</name>
    <name type="synonym">LATHEO</name>
    <name type="synonym">ORC3L</name>
</gene>